<sequence length="815" mass="90128">MNIYRLSFVSCLVMAMPCAMAVEFNLNVLDKSMRDRIDISLLKEKGVIAPGEYFVSVAVNNNKISNGQKINWQKKGDKTIPCINDSLVDKFGLKPDIRQSLPQIDRCIDFSSRPEMLFNFDQANQQLNISIPQAWLAWHSENWAPPSTWKEGVAGVLMDYNLFASSYRPQDGSSSTNLNAYGTAGINAGAWRLRSDYQLNKTDSEDNHDQSGGISRTYLFRPLPQLGSKLTLGETDFSSNIFDGFSYTGAALASDDRMLPWELRGYAPQISGIAQTNATVTISQSGRVIYQKKVPPGPFIIDDLNQSVQGTLDVKVTEEDGRVNNFQVSAASTPFLTRQGQVRYKLAAGQPRPSMSHQTENETFFSNEVSWGMLSNTSLYGGLLISDDDYHSAAMGIGQNMLWLGALSFDVTWASSHFDTQQDERGLSYRFNYSKQVDATNSTISLAAYRFSDRHFHSYANYLDHKYNDSDAQDEKQTISLSVGQPITPLNLNLYANLLHQTWWNADASTTANITAGFNVDIGDWRDISISTSFNTTHYEDKDRDNQIYLSISLPFGNGGRVGYDMQNSSHSTIHRMSWNDTLDERNSWGMSAGLQSDRPDNGAQVSGNYQHLSSAGEWDISGTYAASDYSSVSSSWSGSFTATQYGAAFHRRSSTNEPRLMVSTDGVADIPVQGNLDYTNHFGIAVVPLISSYQPSTVAVNMNDLPDGVTVAENVIKETWIEGAIGYKSLASRSGKDVNVIIRNASGQFPPLGADIRQDDSGISVGMVGEEGHAWLSGVAENQLFTVVWGEQSCIIHLPERLEDTTKRLILPCH</sequence>
<accession>P75750</accession>
<accession>Q9R7S6</accession>
<accession>Q9R7S7</accession>
<proteinExistence type="inferred from homology"/>
<name>YBGQ_ECOLI</name>
<organism>
    <name type="scientific">Escherichia coli (strain K12)</name>
    <dbReference type="NCBI Taxonomy" id="83333"/>
    <lineage>
        <taxon>Bacteria</taxon>
        <taxon>Pseudomonadati</taxon>
        <taxon>Pseudomonadota</taxon>
        <taxon>Gammaproteobacteria</taxon>
        <taxon>Enterobacterales</taxon>
        <taxon>Enterobacteriaceae</taxon>
        <taxon>Escherichia</taxon>
    </lineage>
</organism>
<reference key="1">
    <citation type="journal article" date="1996" name="DNA Res.">
        <title>A 718-kb DNA sequence of the Escherichia coli K-12 genome corresponding to the 12.7-28.0 min region on the linkage map.</title>
        <authorList>
            <person name="Oshima T."/>
            <person name="Aiba H."/>
            <person name="Baba T."/>
            <person name="Fujita K."/>
            <person name="Hayashi K."/>
            <person name="Honjo A."/>
            <person name="Ikemoto K."/>
            <person name="Inada T."/>
            <person name="Itoh T."/>
            <person name="Kajihara M."/>
            <person name="Kanai K."/>
            <person name="Kashimoto K."/>
            <person name="Kimura S."/>
            <person name="Kitagawa M."/>
            <person name="Makino K."/>
            <person name="Masuda S."/>
            <person name="Miki T."/>
            <person name="Mizobuchi K."/>
            <person name="Mori H."/>
            <person name="Motomura K."/>
            <person name="Nakamura Y."/>
            <person name="Nashimoto H."/>
            <person name="Nishio Y."/>
            <person name="Saito N."/>
            <person name="Sampei G."/>
            <person name="Seki Y."/>
            <person name="Tagami H."/>
            <person name="Takemoto K."/>
            <person name="Wada C."/>
            <person name="Yamamoto Y."/>
            <person name="Yano M."/>
            <person name="Horiuchi T."/>
        </authorList>
    </citation>
    <scope>NUCLEOTIDE SEQUENCE [LARGE SCALE GENOMIC DNA]</scope>
    <source>
        <strain>K12 / W3110 / ATCC 27325 / DSM 5911</strain>
    </source>
</reference>
<reference key="2">
    <citation type="journal article" date="1997" name="Science">
        <title>The complete genome sequence of Escherichia coli K-12.</title>
        <authorList>
            <person name="Blattner F.R."/>
            <person name="Plunkett G. III"/>
            <person name="Bloch C.A."/>
            <person name="Perna N.T."/>
            <person name="Burland V."/>
            <person name="Riley M."/>
            <person name="Collado-Vides J."/>
            <person name="Glasner J.D."/>
            <person name="Rode C.K."/>
            <person name="Mayhew G.F."/>
            <person name="Gregor J."/>
            <person name="Davis N.W."/>
            <person name="Kirkpatrick H.A."/>
            <person name="Goeden M.A."/>
            <person name="Rose D.J."/>
            <person name="Mau B."/>
            <person name="Shao Y."/>
        </authorList>
    </citation>
    <scope>NUCLEOTIDE SEQUENCE [LARGE SCALE GENOMIC DNA]</scope>
    <source>
        <strain>K12 / MG1655 / ATCC 47076</strain>
    </source>
</reference>
<reference key="3">
    <citation type="journal article" date="2006" name="Mol. Syst. Biol.">
        <title>Highly accurate genome sequences of Escherichia coli K-12 strains MG1655 and W3110.</title>
        <authorList>
            <person name="Hayashi K."/>
            <person name="Morooka N."/>
            <person name="Yamamoto Y."/>
            <person name="Fujita K."/>
            <person name="Isono K."/>
            <person name="Choi S."/>
            <person name="Ohtsubo E."/>
            <person name="Baba T."/>
            <person name="Wanner B.L."/>
            <person name="Mori H."/>
            <person name="Horiuchi T."/>
        </authorList>
    </citation>
    <scope>NUCLEOTIDE SEQUENCE [LARGE SCALE GENOMIC DNA]</scope>
    <source>
        <strain>K12 / W3110 / ATCC 27325 / DSM 5911</strain>
    </source>
</reference>
<comment type="function">
    <text>Could be involved in the export and assembly of the putative YbgD fimbrial subunit across the outer membrane.</text>
</comment>
<comment type="subcellular location">
    <subcellularLocation>
        <location evidence="1">Cell outer membrane</location>
        <topology evidence="1">Multi-pass membrane protein</topology>
    </subcellularLocation>
</comment>
<comment type="similarity">
    <text evidence="3">Belongs to the fimbrial export usher family.</text>
</comment>
<feature type="signal peptide" evidence="2">
    <location>
        <begin position="1"/>
        <end position="21"/>
    </location>
</feature>
<feature type="chain" id="PRO_0000009329" description="Uncharacterized outer membrane usher protein YbgQ">
    <location>
        <begin position="22"/>
        <end position="815"/>
    </location>
</feature>
<feature type="disulfide bond" evidence="2">
    <location>
        <begin position="795"/>
        <end position="814"/>
    </location>
</feature>
<keyword id="KW-0998">Cell outer membrane</keyword>
<keyword id="KW-1015">Disulfide bond</keyword>
<keyword id="KW-1029">Fimbrium biogenesis</keyword>
<keyword id="KW-0472">Membrane</keyword>
<keyword id="KW-1185">Reference proteome</keyword>
<keyword id="KW-0732">Signal</keyword>
<keyword id="KW-0812">Transmembrane</keyword>
<keyword id="KW-1134">Transmembrane beta strand</keyword>
<keyword id="KW-0813">Transport</keyword>
<evidence type="ECO:0000250" key="1"/>
<evidence type="ECO:0000255" key="2"/>
<evidence type="ECO:0000305" key="3"/>
<gene>
    <name type="primary">ybgQ</name>
    <name type="ordered locus">b0718</name>
    <name type="ordered locus">JW5099</name>
</gene>
<protein>
    <recommendedName>
        <fullName>Uncharacterized outer membrane usher protein YbgQ</fullName>
    </recommendedName>
</protein>
<dbReference type="EMBL" id="U00096">
    <property type="protein sequence ID" value="AAC73812.2"/>
    <property type="molecule type" value="Genomic_DNA"/>
</dbReference>
<dbReference type="EMBL" id="AP009048">
    <property type="protein sequence ID" value="BAA35382.2"/>
    <property type="molecule type" value="Genomic_DNA"/>
</dbReference>
<dbReference type="PIR" id="E64807">
    <property type="entry name" value="E64807"/>
</dbReference>
<dbReference type="RefSeq" id="NP_415246.2">
    <property type="nucleotide sequence ID" value="NC_000913.3"/>
</dbReference>
<dbReference type="SMR" id="P75750"/>
<dbReference type="BioGRID" id="4259939">
    <property type="interactions" value="128"/>
</dbReference>
<dbReference type="DIP" id="DIP-11401N"/>
<dbReference type="FunCoup" id="P75750">
    <property type="interactions" value="87"/>
</dbReference>
<dbReference type="IntAct" id="P75750">
    <property type="interactions" value="1"/>
</dbReference>
<dbReference type="STRING" id="511145.b0718"/>
<dbReference type="TCDB" id="1.B.11.2.2">
    <property type="family name" value="the outer membrane fimbrial usher porin (fup) family"/>
</dbReference>
<dbReference type="PaxDb" id="511145-b0718"/>
<dbReference type="EnsemblBacteria" id="AAC73812">
    <property type="protein sequence ID" value="AAC73812"/>
    <property type="gene ID" value="b0718"/>
</dbReference>
<dbReference type="GeneID" id="946537"/>
<dbReference type="KEGG" id="ecj:JW5099"/>
<dbReference type="KEGG" id="eco:b0718"/>
<dbReference type="KEGG" id="ecoc:C3026_03590"/>
<dbReference type="PATRIC" id="fig|1411691.4.peg.1555"/>
<dbReference type="EchoBASE" id="EB3097"/>
<dbReference type="eggNOG" id="COG3188">
    <property type="taxonomic scope" value="Bacteria"/>
</dbReference>
<dbReference type="HOGENOM" id="CLU_009120_1_1_6"/>
<dbReference type="InParanoid" id="P75750"/>
<dbReference type="OMA" id="MAMPCAL"/>
<dbReference type="OrthoDB" id="6554712at2"/>
<dbReference type="PhylomeDB" id="P75750"/>
<dbReference type="BioCyc" id="EcoCyc:G6387-MONOMER"/>
<dbReference type="PRO" id="PR:P75750"/>
<dbReference type="Proteomes" id="UP000000625">
    <property type="component" value="Chromosome"/>
</dbReference>
<dbReference type="GO" id="GO:0009279">
    <property type="term" value="C:cell outer membrane"/>
    <property type="evidence" value="ECO:0000318"/>
    <property type="project" value="GO_Central"/>
</dbReference>
<dbReference type="GO" id="GO:0015473">
    <property type="term" value="F:fimbrial usher porin activity"/>
    <property type="evidence" value="ECO:0000318"/>
    <property type="project" value="GO_Central"/>
</dbReference>
<dbReference type="GO" id="GO:0009297">
    <property type="term" value="P:pilus assembly"/>
    <property type="evidence" value="ECO:0000318"/>
    <property type="project" value="GO_Central"/>
</dbReference>
<dbReference type="FunFam" id="2.60.40.3110:FF:000001">
    <property type="entry name" value="Putative fimbrial outer membrane usher"/>
    <property type="match status" value="1"/>
</dbReference>
<dbReference type="Gene3D" id="2.60.40.2070">
    <property type="match status" value="1"/>
</dbReference>
<dbReference type="Gene3D" id="2.60.40.3110">
    <property type="match status" value="1"/>
</dbReference>
<dbReference type="Gene3D" id="3.10.20.410">
    <property type="match status" value="1"/>
</dbReference>
<dbReference type="Gene3D" id="2.60.40.2610">
    <property type="entry name" value="Outer membrane usher protein FimD, plug domain"/>
    <property type="match status" value="1"/>
</dbReference>
<dbReference type="InterPro" id="IPR000015">
    <property type="entry name" value="Fimb_usher"/>
</dbReference>
<dbReference type="InterPro" id="IPR018030">
    <property type="entry name" value="Fimbrial_membr_usher_CS"/>
</dbReference>
<dbReference type="InterPro" id="IPR042186">
    <property type="entry name" value="FimD_plug_dom"/>
</dbReference>
<dbReference type="InterPro" id="IPR025949">
    <property type="entry name" value="PapC-like_C"/>
</dbReference>
<dbReference type="InterPro" id="IPR043142">
    <property type="entry name" value="PapC-like_C_sf"/>
</dbReference>
<dbReference type="InterPro" id="IPR025885">
    <property type="entry name" value="PapC_N"/>
</dbReference>
<dbReference type="InterPro" id="IPR037224">
    <property type="entry name" value="PapC_N_sf"/>
</dbReference>
<dbReference type="PANTHER" id="PTHR30451">
    <property type="entry name" value="OUTER MEMBRANE USHER PROTEIN"/>
    <property type="match status" value="1"/>
</dbReference>
<dbReference type="PANTHER" id="PTHR30451:SF4">
    <property type="entry name" value="OUTER MEMBRANE USHER PROTEIN YQIG-RELATED"/>
    <property type="match status" value="1"/>
</dbReference>
<dbReference type="Pfam" id="PF13953">
    <property type="entry name" value="PapC_C"/>
    <property type="match status" value="1"/>
</dbReference>
<dbReference type="Pfam" id="PF13954">
    <property type="entry name" value="PapC_N"/>
    <property type="match status" value="1"/>
</dbReference>
<dbReference type="Pfam" id="PF00577">
    <property type="entry name" value="Usher"/>
    <property type="match status" value="1"/>
</dbReference>
<dbReference type="SUPFAM" id="SSF141729">
    <property type="entry name" value="FimD N-terminal domain-like"/>
    <property type="match status" value="1"/>
</dbReference>
<dbReference type="PROSITE" id="PS01151">
    <property type="entry name" value="FIMBRIAL_USHER"/>
    <property type="match status" value="1"/>
</dbReference>